<accession>P80740</accession>
<reference key="1">
    <citation type="journal article" date="1998" name="J. Allergy Clin. Immunol.">
        <title>Purification, characterization, and partial sequencing of two new allergens of Olea europaea.</title>
        <authorList>
            <person name="Boluda L."/>
            <person name="Alonso C."/>
            <person name="Fernandez-Caldas E."/>
        </authorList>
    </citation>
    <scope>PROTEIN SEQUENCE OF 2-30</scope>
    <source>
        <tissue>Pollen</tissue>
    </source>
</reference>
<reference key="2">
    <citation type="journal article" date="1998" name="Physiol. Plantarum">
        <title>Identification and immunolocalization of superoxide dismutase isoenzymes of olive pollen.</title>
        <authorList>
            <person name="Alche J.D."/>
            <person name="Corpas F.J."/>
            <person name="Rodriguez-Garcia M.I."/>
            <person name="del Rio L.A."/>
        </authorList>
    </citation>
    <scope>FUNCTION</scope>
    <scope>SUBCELLULAR LOCATION</scope>
    <scope>ACTIVITY REGULATION</scope>
    <scope>TISSUE SPECIFICITY</scope>
</reference>
<reference key="3">
    <citation type="journal article" date="2006" name="Plant Cell Physiol.">
        <title>The expression of different superoxide dismutase forms is cell-type dependent in olive (Olea europaea L.) leaves.</title>
        <authorList>
            <person name="Corpas F.J."/>
            <person name="Fernandez-Ocana A."/>
            <person name="Carreras A."/>
            <person name="Valderrama R."/>
            <person name="Luque F."/>
            <person name="Esteban F.J."/>
            <person name="Rodriguez-Serrano M."/>
            <person name="Chaki M."/>
            <person name="Pedrajas J.R."/>
            <person name="Sandalio L.M."/>
            <person name="del Rio L.A."/>
            <person name="Barroso J.B."/>
        </authorList>
    </citation>
    <scope>TISSUE SPECIFICITY</scope>
</reference>
<reference key="4">
    <citation type="journal article" date="2011" name="J. Agric. Food Chem.">
        <title>Identification of olive (Olea europaea) pulp proteins by matrix-assisted laser desorption/ionization time-of-flight mass spectrometry and nano-liquid chromatography tandem mass spectrometry.</title>
        <authorList>
            <person name="Esteve C."/>
            <person name="Canas B."/>
            <person name="Moreno-Gordaliza E."/>
            <person name="Del Rio C."/>
            <person name="Garcia M.C."/>
            <person name="Marina M.L."/>
        </authorList>
    </citation>
    <scope>IDENTIFICATION BY MASS SPECTROMETRY</scope>
    <scope>TISSUE SPECIFICITY</scope>
</reference>
<reference key="5">
    <citation type="journal article" date="2012" name="Talanta">
        <title>Analysis of olive allergens.</title>
        <authorList>
            <person name="Esteve C."/>
            <person name="Montealegre C."/>
            <person name="Marina M.L."/>
            <person name="Garcia M.C."/>
        </authorList>
    </citation>
    <scope>REVIEW</scope>
    <scope>NOMENCLATURE</scope>
</reference>
<comment type="function">
    <text evidence="5">Destroys radicals which are normally produced within the cells and which are toxic to biological systems. Probably involved in the protection against oxidative stress during pollen development.</text>
</comment>
<comment type="catalytic activity">
    <reaction>
        <text>2 superoxide + 2 H(+) = H2O2 + O2</text>
        <dbReference type="Rhea" id="RHEA:20696"/>
        <dbReference type="ChEBI" id="CHEBI:15378"/>
        <dbReference type="ChEBI" id="CHEBI:15379"/>
        <dbReference type="ChEBI" id="CHEBI:16240"/>
        <dbReference type="ChEBI" id="CHEBI:18421"/>
        <dbReference type="EC" id="1.15.1.1"/>
    </reaction>
</comment>
<comment type="cofactor">
    <cofactor evidence="1">
        <name>Cu cation</name>
        <dbReference type="ChEBI" id="CHEBI:23378"/>
    </cofactor>
    <text evidence="1">Binds 1 copper ion per subunit.</text>
</comment>
<comment type="cofactor">
    <cofactor evidence="1">
        <name>Zn(2+)</name>
        <dbReference type="ChEBI" id="CHEBI:29105"/>
    </cofactor>
    <text evidence="1">Binds 1 zinc ion per subunit.</text>
</comment>
<comment type="activity regulation">
    <text evidence="5">Inhibited by KCN and H(2)O(2).</text>
</comment>
<comment type="subcellular location">
    <subcellularLocation>
        <location evidence="5">Cytoplasm</location>
    </subcellularLocation>
    <subcellularLocation>
        <location evidence="5">Endoplasmic reticulum</location>
    </subcellularLocation>
</comment>
<comment type="tissue specificity">
    <text evidence="2 3 5">Expressed in fruits, leaves and pollen grains.</text>
</comment>
<comment type="polymorphism">
    <text>Several isoforms of the allergen exist due to polymorphism.</text>
</comment>
<comment type="allergen">
    <text evidence="7">Causes an allergic reaction in human. Allergen from olive pollen. Important in Mediterranean countries and California. Its prevalence is related to the geographic area.</text>
</comment>
<comment type="similarity">
    <text evidence="6">Belongs to the Cu-Zn superoxide dismutase family.</text>
</comment>
<protein>
    <recommendedName>
        <fullName>Superoxide dismutase [Cu-Zn] 1</fullName>
        <ecNumber>1.15.1.1</ecNumber>
    </recommendedName>
    <alternativeName>
        <fullName>Allergen Ole e V</fullName>
    </alternativeName>
    <allergenName>Ole e 5</allergenName>
</protein>
<sequence length="30" mass="3104">MVKAVTVLNSSEGPHGIVYFAQEGDGPTTV</sequence>
<proteinExistence type="evidence at protein level"/>
<keyword id="KW-0020">Allergen</keyword>
<keyword id="KW-0049">Antioxidant</keyword>
<keyword id="KW-0186">Copper</keyword>
<keyword id="KW-0963">Cytoplasm</keyword>
<keyword id="KW-0903">Direct protein sequencing</keyword>
<keyword id="KW-0256">Endoplasmic reticulum</keyword>
<keyword id="KW-0479">Metal-binding</keyword>
<keyword id="KW-0560">Oxidoreductase</keyword>
<keyword id="KW-0862">Zinc</keyword>
<feature type="initiator methionine" description="Removed" evidence="4">
    <location>
        <position position="1"/>
    </location>
</feature>
<feature type="chain" id="PRO_0000164147" description="Superoxide dismutase [Cu-Zn] 1">
    <location>
        <begin position="2"/>
        <end position="30" status="greater than"/>
    </location>
</feature>
<feature type="non-terminal residue">
    <location>
        <position position="30"/>
    </location>
</feature>
<dbReference type="EC" id="1.15.1.1"/>
<dbReference type="SMR" id="P80740"/>
<dbReference type="Allergome" id="3386">
    <property type="allergen name" value="Ole e 5.0101"/>
</dbReference>
<dbReference type="Allergome" id="493">
    <property type="allergen name" value="Ole e 5"/>
</dbReference>
<dbReference type="GO" id="GO:0005783">
    <property type="term" value="C:endoplasmic reticulum"/>
    <property type="evidence" value="ECO:0007669"/>
    <property type="project" value="UniProtKB-SubCell"/>
</dbReference>
<dbReference type="GO" id="GO:0046872">
    <property type="term" value="F:metal ion binding"/>
    <property type="evidence" value="ECO:0007669"/>
    <property type="project" value="UniProtKB-KW"/>
</dbReference>
<dbReference type="GO" id="GO:0004784">
    <property type="term" value="F:superoxide dismutase activity"/>
    <property type="evidence" value="ECO:0007669"/>
    <property type="project" value="UniProtKB-EC"/>
</dbReference>
<name>SODC1_OLEEU</name>
<organism>
    <name type="scientific">Olea europaea</name>
    <name type="common">Common olive</name>
    <dbReference type="NCBI Taxonomy" id="4146"/>
    <lineage>
        <taxon>Eukaryota</taxon>
        <taxon>Viridiplantae</taxon>
        <taxon>Streptophyta</taxon>
        <taxon>Embryophyta</taxon>
        <taxon>Tracheophyta</taxon>
        <taxon>Spermatophyta</taxon>
        <taxon>Magnoliopsida</taxon>
        <taxon>eudicotyledons</taxon>
        <taxon>Gunneridae</taxon>
        <taxon>Pentapetalae</taxon>
        <taxon>asterids</taxon>
        <taxon>lamiids</taxon>
        <taxon>Lamiales</taxon>
        <taxon>Oleaceae</taxon>
        <taxon>Oleeae</taxon>
        <taxon>Olea</taxon>
    </lineage>
</organism>
<evidence type="ECO:0000250" key="1"/>
<evidence type="ECO:0000269" key="2">
    <source>
    </source>
</evidence>
<evidence type="ECO:0000269" key="3">
    <source>
    </source>
</evidence>
<evidence type="ECO:0000269" key="4">
    <source>
    </source>
</evidence>
<evidence type="ECO:0000269" key="5">
    <source ref="2"/>
</evidence>
<evidence type="ECO:0000305" key="6"/>
<evidence type="ECO:0000305" key="7">
    <source>
    </source>
</evidence>